<reference key="1">
    <citation type="journal article" date="2007" name="Environ. Microbiol.">
        <title>Whole-genome analysis of the ammonia-oxidizing bacterium, Nitrosomonas eutropha C91: implications for niche adaptation.</title>
        <authorList>
            <person name="Stein L.Y."/>
            <person name="Arp D.J."/>
            <person name="Berube P.M."/>
            <person name="Chain P.S."/>
            <person name="Hauser L."/>
            <person name="Jetten M.S."/>
            <person name="Klotz M.G."/>
            <person name="Larimer F.W."/>
            <person name="Norton J.M."/>
            <person name="Op den Camp H.J.M."/>
            <person name="Shin M."/>
            <person name="Wei X."/>
        </authorList>
    </citation>
    <scope>NUCLEOTIDE SEQUENCE [LARGE SCALE GENOMIC DNA]</scope>
    <source>
        <strain>DSM 101675 / C91 / Nm57</strain>
    </source>
</reference>
<evidence type="ECO:0000255" key="1">
    <source>
        <dbReference type="HAMAP-Rule" id="MF_00203"/>
    </source>
</evidence>
<dbReference type="EMBL" id="CP000450">
    <property type="protein sequence ID" value="ABI59660.1"/>
    <property type="molecule type" value="Genomic_DNA"/>
</dbReference>
<dbReference type="RefSeq" id="WP_011634466.1">
    <property type="nucleotide sequence ID" value="NC_008344.1"/>
</dbReference>
<dbReference type="SMR" id="Q0AG72"/>
<dbReference type="STRING" id="335283.Neut_1412"/>
<dbReference type="KEGG" id="net:Neut_1412"/>
<dbReference type="eggNOG" id="COG0322">
    <property type="taxonomic scope" value="Bacteria"/>
</dbReference>
<dbReference type="HOGENOM" id="CLU_014841_3_0_4"/>
<dbReference type="OrthoDB" id="9804933at2"/>
<dbReference type="Proteomes" id="UP000001966">
    <property type="component" value="Chromosome"/>
</dbReference>
<dbReference type="GO" id="GO:0005737">
    <property type="term" value="C:cytoplasm"/>
    <property type="evidence" value="ECO:0007669"/>
    <property type="project" value="UniProtKB-SubCell"/>
</dbReference>
<dbReference type="GO" id="GO:0009380">
    <property type="term" value="C:excinuclease repair complex"/>
    <property type="evidence" value="ECO:0007669"/>
    <property type="project" value="InterPro"/>
</dbReference>
<dbReference type="GO" id="GO:0003677">
    <property type="term" value="F:DNA binding"/>
    <property type="evidence" value="ECO:0007669"/>
    <property type="project" value="UniProtKB-UniRule"/>
</dbReference>
<dbReference type="GO" id="GO:0009381">
    <property type="term" value="F:excinuclease ABC activity"/>
    <property type="evidence" value="ECO:0007669"/>
    <property type="project" value="UniProtKB-UniRule"/>
</dbReference>
<dbReference type="GO" id="GO:0006289">
    <property type="term" value="P:nucleotide-excision repair"/>
    <property type="evidence" value="ECO:0007669"/>
    <property type="project" value="UniProtKB-UniRule"/>
</dbReference>
<dbReference type="GO" id="GO:0009432">
    <property type="term" value="P:SOS response"/>
    <property type="evidence" value="ECO:0007669"/>
    <property type="project" value="UniProtKB-UniRule"/>
</dbReference>
<dbReference type="CDD" id="cd10434">
    <property type="entry name" value="GIY-YIG_UvrC_Cho"/>
    <property type="match status" value="1"/>
</dbReference>
<dbReference type="FunFam" id="1.10.150.20:FF:000005">
    <property type="entry name" value="UvrABC system protein C"/>
    <property type="match status" value="1"/>
</dbReference>
<dbReference type="FunFam" id="3.30.420.340:FF:000001">
    <property type="entry name" value="UvrABC system protein C"/>
    <property type="match status" value="1"/>
</dbReference>
<dbReference type="FunFam" id="3.40.1440.10:FF:000001">
    <property type="entry name" value="UvrABC system protein C"/>
    <property type="match status" value="1"/>
</dbReference>
<dbReference type="Gene3D" id="1.10.150.20">
    <property type="entry name" value="5' to 3' exonuclease, C-terminal subdomain"/>
    <property type="match status" value="1"/>
</dbReference>
<dbReference type="Gene3D" id="3.40.1440.10">
    <property type="entry name" value="GIY-YIG endonuclease"/>
    <property type="match status" value="1"/>
</dbReference>
<dbReference type="Gene3D" id="3.30.420.340">
    <property type="entry name" value="UvrC, RNAse H endonuclease domain"/>
    <property type="match status" value="1"/>
</dbReference>
<dbReference type="HAMAP" id="MF_00203">
    <property type="entry name" value="UvrC"/>
    <property type="match status" value="1"/>
</dbReference>
<dbReference type="InterPro" id="IPR000305">
    <property type="entry name" value="GIY-YIG_endonuc"/>
</dbReference>
<dbReference type="InterPro" id="IPR035901">
    <property type="entry name" value="GIY-YIG_endonuc_sf"/>
</dbReference>
<dbReference type="InterPro" id="IPR047296">
    <property type="entry name" value="GIY-YIG_UvrC_Cho"/>
</dbReference>
<dbReference type="InterPro" id="IPR003583">
    <property type="entry name" value="Hlx-hairpin-Hlx_DNA-bd_motif"/>
</dbReference>
<dbReference type="InterPro" id="IPR010994">
    <property type="entry name" value="RuvA_2-like"/>
</dbReference>
<dbReference type="InterPro" id="IPR001943">
    <property type="entry name" value="UVR_dom"/>
</dbReference>
<dbReference type="InterPro" id="IPR036876">
    <property type="entry name" value="UVR_dom_sf"/>
</dbReference>
<dbReference type="InterPro" id="IPR050066">
    <property type="entry name" value="UvrABC_protein_C"/>
</dbReference>
<dbReference type="InterPro" id="IPR004791">
    <property type="entry name" value="UvrC"/>
</dbReference>
<dbReference type="InterPro" id="IPR001162">
    <property type="entry name" value="UvrC_RNase_H_dom"/>
</dbReference>
<dbReference type="InterPro" id="IPR038476">
    <property type="entry name" value="UvrC_RNase_H_dom_sf"/>
</dbReference>
<dbReference type="NCBIfam" id="NF001824">
    <property type="entry name" value="PRK00558.1-5"/>
    <property type="match status" value="1"/>
</dbReference>
<dbReference type="NCBIfam" id="TIGR00194">
    <property type="entry name" value="uvrC"/>
    <property type="match status" value="1"/>
</dbReference>
<dbReference type="PANTHER" id="PTHR30562:SF1">
    <property type="entry name" value="UVRABC SYSTEM PROTEIN C"/>
    <property type="match status" value="1"/>
</dbReference>
<dbReference type="PANTHER" id="PTHR30562">
    <property type="entry name" value="UVRC/OXIDOREDUCTASE"/>
    <property type="match status" value="1"/>
</dbReference>
<dbReference type="Pfam" id="PF01541">
    <property type="entry name" value="GIY-YIG"/>
    <property type="match status" value="1"/>
</dbReference>
<dbReference type="Pfam" id="PF14520">
    <property type="entry name" value="HHH_5"/>
    <property type="match status" value="1"/>
</dbReference>
<dbReference type="Pfam" id="PF02151">
    <property type="entry name" value="UVR"/>
    <property type="match status" value="1"/>
</dbReference>
<dbReference type="Pfam" id="PF22920">
    <property type="entry name" value="UvrC_RNaseH"/>
    <property type="match status" value="1"/>
</dbReference>
<dbReference type="Pfam" id="PF08459">
    <property type="entry name" value="UvrC_RNaseH_dom"/>
    <property type="match status" value="1"/>
</dbReference>
<dbReference type="SMART" id="SM00465">
    <property type="entry name" value="GIYc"/>
    <property type="match status" value="1"/>
</dbReference>
<dbReference type="SMART" id="SM00278">
    <property type="entry name" value="HhH1"/>
    <property type="match status" value="2"/>
</dbReference>
<dbReference type="SUPFAM" id="SSF46600">
    <property type="entry name" value="C-terminal UvrC-binding domain of UvrB"/>
    <property type="match status" value="1"/>
</dbReference>
<dbReference type="SUPFAM" id="SSF82771">
    <property type="entry name" value="GIY-YIG endonuclease"/>
    <property type="match status" value="1"/>
</dbReference>
<dbReference type="SUPFAM" id="SSF47781">
    <property type="entry name" value="RuvA domain 2-like"/>
    <property type="match status" value="1"/>
</dbReference>
<dbReference type="PROSITE" id="PS50164">
    <property type="entry name" value="GIY_YIG"/>
    <property type="match status" value="1"/>
</dbReference>
<dbReference type="PROSITE" id="PS50151">
    <property type="entry name" value="UVR"/>
    <property type="match status" value="1"/>
</dbReference>
<dbReference type="PROSITE" id="PS50165">
    <property type="entry name" value="UVRC"/>
    <property type="match status" value="1"/>
</dbReference>
<keyword id="KW-0963">Cytoplasm</keyword>
<keyword id="KW-0227">DNA damage</keyword>
<keyword id="KW-0228">DNA excision</keyword>
<keyword id="KW-0234">DNA repair</keyword>
<keyword id="KW-0267">Excision nuclease</keyword>
<keyword id="KW-0742">SOS response</keyword>
<comment type="function">
    <text evidence="1">The UvrABC repair system catalyzes the recognition and processing of DNA lesions. UvrC both incises the 5' and 3' sides of the lesion. The N-terminal half is responsible for the 3' incision and the C-terminal half is responsible for the 5' incision.</text>
</comment>
<comment type="subunit">
    <text evidence="1">Interacts with UvrB in an incision complex.</text>
</comment>
<comment type="subcellular location">
    <subcellularLocation>
        <location evidence="1">Cytoplasm</location>
    </subcellularLocation>
</comment>
<comment type="similarity">
    <text evidence="1">Belongs to the UvrC family.</text>
</comment>
<proteinExistence type="inferred from homology"/>
<feature type="chain" id="PRO_1000077814" description="UvrABC system protein C">
    <location>
        <begin position="1"/>
        <end position="604"/>
    </location>
</feature>
<feature type="domain" description="GIY-YIG" evidence="1">
    <location>
        <begin position="17"/>
        <end position="95"/>
    </location>
</feature>
<feature type="domain" description="UVR" evidence="1">
    <location>
        <begin position="204"/>
        <end position="239"/>
    </location>
</feature>
<gene>
    <name evidence="1" type="primary">uvrC</name>
    <name type="ordered locus">Neut_1412</name>
</gene>
<accession>Q0AG72</accession>
<name>UVRC_NITEC</name>
<sequence length="604" mass="68173">MPDSSFDGKAFVLTLPSQPGVYRMLNAAGDVIYVGKAIDLRKRVSSYFQKSNLSPRIQLMVSQITGIETTVTRSEAEALLLENNLIKSLAPRYNILFRDDKSYPYLLLTNHAFPRLAFYRGALDNRHQYFGPFPNAGVVKSSIQLLQKVFRLRTCENSVFNNRTRPCLLHQIKRCSAPCVNLITPEAYREDVNSAALFLQGKQDEVLKTIEQKMFEASDRQAYEQAVLFRDQMQALRMIQEKQFVDSSRALDADVIACTTGTDKHTVAVNLVMIRSGRHLGDKTFFPQNTHEDSISTVLEAFVSQHYLNRSVPPLIILGKKIRVTLLQKLLSEQAGHKVTLTINPIGERRKWLDMATENAQLALRQKQIQQASQEDRLQALQEVLNLPGLARIECFDISHTMGEATMASCVVYDHYAMRNGEYRRYNITGITPGDDYAAMRDVLQRRYAKIAMEEGKLPDLILIDGGKGQIGVASEVMIELGLNDIPLVGVAKGEARKPGLEQLILPWQEETLHLPNDHPALHLIQQIRDEAHRFAIQGHRAKRAKTRKTSSLEQIAGIGSKRRQNLLTRFGGLKGVKNASIEELQQTEGVSRALAEKIYRELR</sequence>
<organism>
    <name type="scientific">Nitrosomonas eutropha (strain DSM 101675 / C91 / Nm57)</name>
    <dbReference type="NCBI Taxonomy" id="335283"/>
    <lineage>
        <taxon>Bacteria</taxon>
        <taxon>Pseudomonadati</taxon>
        <taxon>Pseudomonadota</taxon>
        <taxon>Betaproteobacteria</taxon>
        <taxon>Nitrosomonadales</taxon>
        <taxon>Nitrosomonadaceae</taxon>
        <taxon>Nitrosomonas</taxon>
    </lineage>
</organism>
<protein>
    <recommendedName>
        <fullName evidence="1">UvrABC system protein C</fullName>
        <shortName evidence="1">Protein UvrC</shortName>
    </recommendedName>
    <alternativeName>
        <fullName evidence="1">Excinuclease ABC subunit C</fullName>
    </alternativeName>
</protein>